<evidence type="ECO:0000250" key="1">
    <source>
        <dbReference type="UniProtKB" id="P60604"/>
    </source>
</evidence>
<evidence type="ECO:0000250" key="2">
    <source>
        <dbReference type="UniProtKB" id="P60605"/>
    </source>
</evidence>
<evidence type="ECO:0000255" key="3">
    <source>
        <dbReference type="PROSITE-ProRule" id="PRU00388"/>
    </source>
</evidence>
<evidence type="ECO:0000255" key="4">
    <source>
        <dbReference type="PROSITE-ProRule" id="PRU10133"/>
    </source>
</evidence>
<dbReference type="EC" id="2.3.2.23"/>
<dbReference type="EMBL" id="BT026143">
    <property type="protein sequence ID" value="ABG66982.1"/>
    <property type="molecule type" value="mRNA"/>
</dbReference>
<dbReference type="EMBL" id="BC118376">
    <property type="protein sequence ID" value="AAI18377.1"/>
    <property type="molecule type" value="mRNA"/>
</dbReference>
<dbReference type="RefSeq" id="NP_001069796.1">
    <property type="nucleotide sequence ID" value="NM_001076328.1"/>
</dbReference>
<dbReference type="BMRB" id="Q17QG5"/>
<dbReference type="SMR" id="Q17QG5"/>
<dbReference type="FunCoup" id="Q17QG5">
    <property type="interactions" value="3408"/>
</dbReference>
<dbReference type="STRING" id="9913.ENSBTAP00000055782"/>
<dbReference type="PaxDb" id="9913-ENSBTAP00000055782"/>
<dbReference type="GeneID" id="614471"/>
<dbReference type="KEGG" id="bta:614471"/>
<dbReference type="CTD" id="7327"/>
<dbReference type="VEuPathDB" id="HostDB:ENSBTAG00000048090"/>
<dbReference type="eggNOG" id="KOG0426">
    <property type="taxonomic scope" value="Eukaryota"/>
</dbReference>
<dbReference type="HOGENOM" id="CLU_030988_10_1_1"/>
<dbReference type="InParanoid" id="Q17QG5"/>
<dbReference type="OMA" id="APDGMFT"/>
<dbReference type="OrthoDB" id="19692at2759"/>
<dbReference type="Reactome" id="R-BTA-8866652">
    <property type="pathway name" value="Synthesis of active ubiquitin: roles of E1 and E2 enzymes"/>
</dbReference>
<dbReference type="Reactome" id="R-BTA-983168">
    <property type="pathway name" value="Antigen processing: Ubiquitination &amp; Proteasome degradation"/>
</dbReference>
<dbReference type="UniPathway" id="UPA00143"/>
<dbReference type="Proteomes" id="UP000009136">
    <property type="component" value="Chromosome 1"/>
</dbReference>
<dbReference type="Bgee" id="ENSBTAG00000048090">
    <property type="expression patterns" value="Expressed in vas deferens and 107 other cell types or tissues"/>
</dbReference>
<dbReference type="GO" id="GO:0005829">
    <property type="term" value="C:cytosol"/>
    <property type="evidence" value="ECO:0000318"/>
    <property type="project" value="GO_Central"/>
</dbReference>
<dbReference type="GO" id="GO:0005783">
    <property type="term" value="C:endoplasmic reticulum"/>
    <property type="evidence" value="ECO:0000250"/>
    <property type="project" value="UniProtKB"/>
</dbReference>
<dbReference type="GO" id="GO:0005811">
    <property type="term" value="C:lipid droplet"/>
    <property type="evidence" value="ECO:0000250"/>
    <property type="project" value="UniProtKB"/>
</dbReference>
<dbReference type="GO" id="GO:0005524">
    <property type="term" value="F:ATP binding"/>
    <property type="evidence" value="ECO:0007669"/>
    <property type="project" value="UniProtKB-KW"/>
</dbReference>
<dbReference type="GO" id="GO:0061631">
    <property type="term" value="F:ubiquitin conjugating enzyme activity"/>
    <property type="evidence" value="ECO:0000318"/>
    <property type="project" value="GO_Central"/>
</dbReference>
<dbReference type="GO" id="GO:0004842">
    <property type="term" value="F:ubiquitin-protein transferase activity"/>
    <property type="evidence" value="ECO:0000250"/>
    <property type="project" value="UniProtKB"/>
</dbReference>
<dbReference type="GO" id="GO:0036503">
    <property type="term" value="P:ERAD pathway"/>
    <property type="evidence" value="ECO:0000250"/>
    <property type="project" value="UniProtKB"/>
</dbReference>
<dbReference type="GO" id="GO:0070936">
    <property type="term" value="P:protein K48-linked ubiquitination"/>
    <property type="evidence" value="ECO:0000250"/>
    <property type="project" value="UniProtKB"/>
</dbReference>
<dbReference type="GO" id="GO:0000209">
    <property type="term" value="P:protein polyubiquitination"/>
    <property type="evidence" value="ECO:0000318"/>
    <property type="project" value="GO_Central"/>
</dbReference>
<dbReference type="GO" id="GO:0006511">
    <property type="term" value="P:ubiquitin-dependent protein catabolic process"/>
    <property type="evidence" value="ECO:0000318"/>
    <property type="project" value="GO_Central"/>
</dbReference>
<dbReference type="CDD" id="cd23796">
    <property type="entry name" value="UBCc_UBE2G2"/>
    <property type="match status" value="1"/>
</dbReference>
<dbReference type="FunFam" id="3.10.110.10:FF:000008">
    <property type="entry name" value="Ubiquitin-conjugating enzyme E2 G2"/>
    <property type="match status" value="1"/>
</dbReference>
<dbReference type="Gene3D" id="3.10.110.10">
    <property type="entry name" value="Ubiquitin Conjugating Enzyme"/>
    <property type="match status" value="1"/>
</dbReference>
<dbReference type="InterPro" id="IPR050113">
    <property type="entry name" value="Ub_conjugating_enzyme"/>
</dbReference>
<dbReference type="InterPro" id="IPR000608">
    <property type="entry name" value="UBQ-conjugat_E2_core"/>
</dbReference>
<dbReference type="InterPro" id="IPR023313">
    <property type="entry name" value="UBQ-conjugating_AS"/>
</dbReference>
<dbReference type="InterPro" id="IPR016135">
    <property type="entry name" value="UBQ-conjugating_enzyme/RWD"/>
</dbReference>
<dbReference type="PANTHER" id="PTHR24067">
    <property type="entry name" value="UBIQUITIN-CONJUGATING ENZYME E2"/>
    <property type="match status" value="1"/>
</dbReference>
<dbReference type="Pfam" id="PF00179">
    <property type="entry name" value="UQ_con"/>
    <property type="match status" value="1"/>
</dbReference>
<dbReference type="SMART" id="SM00212">
    <property type="entry name" value="UBCc"/>
    <property type="match status" value="1"/>
</dbReference>
<dbReference type="SUPFAM" id="SSF54495">
    <property type="entry name" value="UBC-like"/>
    <property type="match status" value="1"/>
</dbReference>
<dbReference type="PROSITE" id="PS00183">
    <property type="entry name" value="UBC_1"/>
    <property type="match status" value="1"/>
</dbReference>
<dbReference type="PROSITE" id="PS50127">
    <property type="entry name" value="UBC_2"/>
    <property type="match status" value="1"/>
</dbReference>
<accession>Q17QG5</accession>
<proteinExistence type="evidence at transcript level"/>
<keyword id="KW-0007">Acetylation</keyword>
<keyword id="KW-0067">ATP-binding</keyword>
<keyword id="KW-0256">Endoplasmic reticulum</keyword>
<keyword id="KW-0551">Lipid droplet</keyword>
<keyword id="KW-0547">Nucleotide-binding</keyword>
<keyword id="KW-1185">Reference proteome</keyword>
<keyword id="KW-0808">Transferase</keyword>
<keyword id="KW-0833">Ubl conjugation pathway</keyword>
<reference key="1">
    <citation type="journal article" date="2005" name="BMC Genomics">
        <title>Characterization of 954 bovine full-CDS cDNA sequences.</title>
        <authorList>
            <person name="Harhay G.P."/>
            <person name="Sonstegard T.S."/>
            <person name="Keele J.W."/>
            <person name="Heaton M.P."/>
            <person name="Clawson M.L."/>
            <person name="Snelling W.M."/>
            <person name="Wiedmann R.T."/>
            <person name="Van Tassell C.P."/>
            <person name="Smith T.P.L."/>
        </authorList>
    </citation>
    <scope>NUCLEOTIDE SEQUENCE [LARGE SCALE MRNA]</scope>
</reference>
<reference key="2">
    <citation type="submission" date="2006-06" db="EMBL/GenBank/DDBJ databases">
        <authorList>
            <consortium name="NIH - Mammalian Gene Collection (MGC) project"/>
        </authorList>
    </citation>
    <scope>NUCLEOTIDE SEQUENCE [LARGE SCALE MRNA]</scope>
    <source>
        <strain>Hereford</strain>
        <tissue>Fetal pons</tissue>
    </source>
</reference>
<protein>
    <recommendedName>
        <fullName>Ubiquitin-conjugating enzyme E2 G2</fullName>
        <ecNumber>2.3.2.23</ecNumber>
    </recommendedName>
    <alternativeName>
        <fullName>E2 ubiquitin-conjugating enzyme G2</fullName>
    </alternativeName>
    <alternativeName>
        <fullName>Ubiquitin carrier protein G2</fullName>
    </alternativeName>
    <alternativeName>
        <fullName>Ubiquitin-protein ligase G2</fullName>
    </alternativeName>
</protein>
<name>UB2G2_BOVIN</name>
<comment type="function">
    <text evidence="1">Accepts ubiquitin from the E1 complex and catalyzes its covalent attachment to other proteins. In vitro catalyzes 'Lys-48'-linked polyubiquitination. Involved in endoplasmic reticulum-associated degradation (ERAD). Required for sterol-induced ubiquitination of 3-hydroxy-3-methylglutaryl coenzyme A reductase and its subsequent proteasomal degradation.</text>
</comment>
<comment type="catalytic activity">
    <reaction evidence="1 3 4">
        <text>S-ubiquitinyl-[E1 ubiquitin-activating enzyme]-L-cysteine + [E2 ubiquitin-conjugating enzyme]-L-cysteine = [E1 ubiquitin-activating enzyme]-L-cysteine + S-ubiquitinyl-[E2 ubiquitin-conjugating enzyme]-L-cysteine.</text>
        <dbReference type="EC" id="2.3.2.23"/>
    </reaction>
</comment>
<comment type="pathway">
    <text evidence="3">Protein modification; protein ubiquitination.</text>
</comment>
<comment type="subunit">
    <text evidence="1">Interacts with AUP1 (via C-terminus); the interaction recruits UBE2G2 to lipid droplets. Interacts with ubiquitin ligases AMFR/gp78 and RNF139/TRC8; recruitment to lipid droplets by AUP1 facilitates interaction of UBE2G2 with AMFR and RNF139, leading to sterol-induced ubiquitination of 3-hydroxy-3-methylglutaryl coenzyme A reductase and its subsequent proteasomal degradation.</text>
</comment>
<comment type="subcellular location">
    <subcellularLocation>
        <location evidence="2">Endoplasmic reticulum</location>
    </subcellularLocation>
    <subcellularLocation>
        <location evidence="1">Lipid droplet</location>
    </subcellularLocation>
</comment>
<comment type="similarity">
    <text evidence="3">Belongs to the ubiquitin-conjugating enzyme family.</text>
</comment>
<organism>
    <name type="scientific">Bos taurus</name>
    <name type="common">Bovine</name>
    <dbReference type="NCBI Taxonomy" id="9913"/>
    <lineage>
        <taxon>Eukaryota</taxon>
        <taxon>Metazoa</taxon>
        <taxon>Chordata</taxon>
        <taxon>Craniata</taxon>
        <taxon>Vertebrata</taxon>
        <taxon>Euteleostomi</taxon>
        <taxon>Mammalia</taxon>
        <taxon>Eutheria</taxon>
        <taxon>Laurasiatheria</taxon>
        <taxon>Artiodactyla</taxon>
        <taxon>Ruminantia</taxon>
        <taxon>Pecora</taxon>
        <taxon>Bovidae</taxon>
        <taxon>Bovinae</taxon>
        <taxon>Bos</taxon>
    </lineage>
</organism>
<gene>
    <name evidence="1" type="primary">UBE2G2</name>
    <name evidence="1" type="synonym">UBC7</name>
</gene>
<sequence>MAGTALKRLMAEYKQLTLNPPEGIVAGPMNEENFFEWEALIMGPEDTCFEFGVFPAILSFPLDYPLSPPKMRFTCEMFHPNIYPDGRVCISILHAPGDDPMGYESSAERWSPVQSVEKILLSVVSMLAEPNDESGANVDASKMWRDDREQFYKVAKQIVQKSLGL</sequence>
<feature type="initiator methionine" description="Removed" evidence="1">
    <location>
        <position position="1"/>
    </location>
</feature>
<feature type="chain" id="PRO_0000259961" description="Ubiquitin-conjugating enzyme E2 G2">
    <location>
        <begin position="2"/>
        <end position="165"/>
    </location>
</feature>
<feature type="domain" description="UBC core" evidence="3">
    <location>
        <begin position="4"/>
        <end position="164"/>
    </location>
</feature>
<feature type="active site" description="Glycyl thioester intermediate" evidence="3 4">
    <location>
        <position position="89"/>
    </location>
</feature>
<feature type="modified residue" description="N-acetylalanine" evidence="1">
    <location>
        <position position="2"/>
    </location>
</feature>